<proteinExistence type="inferred from homology"/>
<comment type="catalytic activity">
    <reaction evidence="1">
        <text>tRNA(Cys) + L-cysteine + ATP = L-cysteinyl-tRNA(Cys) + AMP + diphosphate</text>
        <dbReference type="Rhea" id="RHEA:17773"/>
        <dbReference type="Rhea" id="RHEA-COMP:9661"/>
        <dbReference type="Rhea" id="RHEA-COMP:9679"/>
        <dbReference type="ChEBI" id="CHEBI:30616"/>
        <dbReference type="ChEBI" id="CHEBI:33019"/>
        <dbReference type="ChEBI" id="CHEBI:35235"/>
        <dbReference type="ChEBI" id="CHEBI:78442"/>
        <dbReference type="ChEBI" id="CHEBI:78517"/>
        <dbReference type="ChEBI" id="CHEBI:456215"/>
        <dbReference type="EC" id="6.1.1.16"/>
    </reaction>
</comment>
<comment type="cofactor">
    <cofactor evidence="1">
        <name>Zn(2+)</name>
        <dbReference type="ChEBI" id="CHEBI:29105"/>
    </cofactor>
    <text evidence="1">Binds 1 zinc ion per subunit.</text>
</comment>
<comment type="subunit">
    <text evidence="1">Monomer.</text>
</comment>
<comment type="subcellular location">
    <subcellularLocation>
        <location evidence="1">Cytoplasm</location>
    </subcellularLocation>
</comment>
<comment type="similarity">
    <text evidence="1">Belongs to the class-I aminoacyl-tRNA synthetase family.</text>
</comment>
<sequence>MRLYDTLSGGVRDFAPLRPGHVSIYLCGATVQGLPHIGHVRSGVAFDVLRRWLTAKGFDVAFIRNVTDIDDKILIKAADAGRPWWEWAATYERAFTAAYDALGVLPPSAEPRATGHITQMVELIDRLIERGHAYCADQEGNGDVYFSVSTLPEYGKLSGHRIDDVHQGEGVATGKRDQRDFTLWKGAKPGEPSWPTPWGRGRPGWHTECVAMCEAYLGAEFDIHAGGMDLVFPHHENEIAQAEAAGDGFARFWLHNGWVTMGGEKMSKSLGNVLAIPAVLQRVRAAELRYYLGSAHYRSMLEFSENALQDAARAYSGVEDFLHRVRVRVGAVVPGEWTPKFGAALDDDLAVPAALAEVHAARAEGNRALDAGDHDAALTYAMSIRAMMGILGADPLDERWESRDKTSAALAAVDVLVHAEVRRREDARARRDWAEADAIRDRLKEAGIEVTDTGDGPQWSLLDGTDK</sequence>
<keyword id="KW-0030">Aminoacyl-tRNA synthetase</keyword>
<keyword id="KW-0067">ATP-binding</keyword>
<keyword id="KW-0963">Cytoplasm</keyword>
<keyword id="KW-0436">Ligase</keyword>
<keyword id="KW-0479">Metal-binding</keyword>
<keyword id="KW-0547">Nucleotide-binding</keyword>
<keyword id="KW-0648">Protein biosynthesis</keyword>
<keyword id="KW-0862">Zinc</keyword>
<dbReference type="EC" id="6.1.1.16" evidence="1"/>
<dbReference type="EMBL" id="CP000656">
    <property type="protein sequence ID" value="ABP43928.1"/>
    <property type="molecule type" value="Genomic_DNA"/>
</dbReference>
<dbReference type="SMR" id="A4T5K9"/>
<dbReference type="STRING" id="350054.Mflv_1446"/>
<dbReference type="KEGG" id="mgi:Mflv_1446"/>
<dbReference type="eggNOG" id="COG0215">
    <property type="taxonomic scope" value="Bacteria"/>
</dbReference>
<dbReference type="HOGENOM" id="CLU_013528_0_1_11"/>
<dbReference type="OrthoDB" id="9815130at2"/>
<dbReference type="GO" id="GO:0005829">
    <property type="term" value="C:cytosol"/>
    <property type="evidence" value="ECO:0007669"/>
    <property type="project" value="TreeGrafter"/>
</dbReference>
<dbReference type="GO" id="GO:0005524">
    <property type="term" value="F:ATP binding"/>
    <property type="evidence" value="ECO:0007669"/>
    <property type="project" value="UniProtKB-UniRule"/>
</dbReference>
<dbReference type="GO" id="GO:0004817">
    <property type="term" value="F:cysteine-tRNA ligase activity"/>
    <property type="evidence" value="ECO:0007669"/>
    <property type="project" value="UniProtKB-UniRule"/>
</dbReference>
<dbReference type="GO" id="GO:0008270">
    <property type="term" value="F:zinc ion binding"/>
    <property type="evidence" value="ECO:0007669"/>
    <property type="project" value="UniProtKB-UniRule"/>
</dbReference>
<dbReference type="GO" id="GO:0006423">
    <property type="term" value="P:cysteinyl-tRNA aminoacylation"/>
    <property type="evidence" value="ECO:0007669"/>
    <property type="project" value="UniProtKB-UniRule"/>
</dbReference>
<dbReference type="CDD" id="cd00672">
    <property type="entry name" value="CysRS_core"/>
    <property type="match status" value="1"/>
</dbReference>
<dbReference type="FunFam" id="3.40.50.620:FF:000068">
    <property type="entry name" value="Cysteine--tRNA ligase"/>
    <property type="match status" value="1"/>
</dbReference>
<dbReference type="Gene3D" id="1.20.120.1910">
    <property type="entry name" value="Cysteine-tRNA ligase, C-terminal anti-codon recognition domain"/>
    <property type="match status" value="1"/>
</dbReference>
<dbReference type="Gene3D" id="3.40.50.620">
    <property type="entry name" value="HUPs"/>
    <property type="match status" value="1"/>
</dbReference>
<dbReference type="HAMAP" id="MF_00041">
    <property type="entry name" value="Cys_tRNA_synth"/>
    <property type="match status" value="1"/>
</dbReference>
<dbReference type="InterPro" id="IPR015803">
    <property type="entry name" value="Cys-tRNA-ligase"/>
</dbReference>
<dbReference type="InterPro" id="IPR015273">
    <property type="entry name" value="Cys-tRNA-synt_Ia_DALR"/>
</dbReference>
<dbReference type="InterPro" id="IPR024909">
    <property type="entry name" value="Cys-tRNA/MSH_ligase"/>
</dbReference>
<dbReference type="InterPro" id="IPR056411">
    <property type="entry name" value="CysS_C"/>
</dbReference>
<dbReference type="InterPro" id="IPR014729">
    <property type="entry name" value="Rossmann-like_a/b/a_fold"/>
</dbReference>
<dbReference type="InterPro" id="IPR032678">
    <property type="entry name" value="tRNA-synt_1_cat_dom"/>
</dbReference>
<dbReference type="InterPro" id="IPR009080">
    <property type="entry name" value="tRNAsynth_Ia_anticodon-bd"/>
</dbReference>
<dbReference type="NCBIfam" id="TIGR00435">
    <property type="entry name" value="cysS"/>
    <property type="match status" value="1"/>
</dbReference>
<dbReference type="PANTHER" id="PTHR10890:SF30">
    <property type="entry name" value="CYSTEINE--TRNA LIGASE"/>
    <property type="match status" value="1"/>
</dbReference>
<dbReference type="PANTHER" id="PTHR10890">
    <property type="entry name" value="CYSTEINYL-TRNA SYNTHETASE"/>
    <property type="match status" value="1"/>
</dbReference>
<dbReference type="Pfam" id="PF23493">
    <property type="entry name" value="CysS_C"/>
    <property type="match status" value="1"/>
</dbReference>
<dbReference type="Pfam" id="PF09190">
    <property type="entry name" value="DALR_2"/>
    <property type="match status" value="1"/>
</dbReference>
<dbReference type="Pfam" id="PF01406">
    <property type="entry name" value="tRNA-synt_1e"/>
    <property type="match status" value="1"/>
</dbReference>
<dbReference type="PRINTS" id="PR00983">
    <property type="entry name" value="TRNASYNTHCYS"/>
</dbReference>
<dbReference type="SMART" id="SM00840">
    <property type="entry name" value="DALR_2"/>
    <property type="match status" value="1"/>
</dbReference>
<dbReference type="SUPFAM" id="SSF47323">
    <property type="entry name" value="Anticodon-binding domain of a subclass of class I aminoacyl-tRNA synthetases"/>
    <property type="match status" value="1"/>
</dbReference>
<dbReference type="SUPFAM" id="SSF52374">
    <property type="entry name" value="Nucleotidylyl transferase"/>
    <property type="match status" value="1"/>
</dbReference>
<gene>
    <name evidence="1" type="primary">cysS</name>
    <name type="ordered locus">Mflv_1446</name>
</gene>
<protein>
    <recommendedName>
        <fullName evidence="1">Cysteine--tRNA ligase</fullName>
        <ecNumber evidence="1">6.1.1.16</ecNumber>
    </recommendedName>
    <alternativeName>
        <fullName evidence="1">Cysteinyl-tRNA synthetase</fullName>
        <shortName evidence="1">CysRS</shortName>
    </alternativeName>
</protein>
<name>SYC_MYCGI</name>
<organism>
    <name type="scientific">Mycolicibacterium gilvum (strain PYR-GCK)</name>
    <name type="common">Mycobacterium gilvum (strain PYR-GCK)</name>
    <dbReference type="NCBI Taxonomy" id="350054"/>
    <lineage>
        <taxon>Bacteria</taxon>
        <taxon>Bacillati</taxon>
        <taxon>Actinomycetota</taxon>
        <taxon>Actinomycetes</taxon>
        <taxon>Mycobacteriales</taxon>
        <taxon>Mycobacteriaceae</taxon>
        <taxon>Mycolicibacterium</taxon>
    </lineage>
</organism>
<evidence type="ECO:0000255" key="1">
    <source>
        <dbReference type="HAMAP-Rule" id="MF_00041"/>
    </source>
</evidence>
<feature type="chain" id="PRO_0000332853" description="Cysteine--tRNA ligase">
    <location>
        <begin position="1"/>
        <end position="467"/>
    </location>
</feature>
<feature type="short sequence motif" description="'HIGH' region">
    <location>
        <begin position="29"/>
        <end position="39"/>
    </location>
</feature>
<feature type="short sequence motif" description="'KMSKS' region">
    <location>
        <begin position="265"/>
        <end position="269"/>
    </location>
</feature>
<feature type="binding site" evidence="1">
    <location>
        <position position="27"/>
    </location>
    <ligand>
        <name>Zn(2+)</name>
        <dbReference type="ChEBI" id="CHEBI:29105"/>
    </ligand>
</feature>
<feature type="binding site" evidence="1">
    <location>
        <position position="209"/>
    </location>
    <ligand>
        <name>Zn(2+)</name>
        <dbReference type="ChEBI" id="CHEBI:29105"/>
    </ligand>
</feature>
<feature type="binding site" evidence="1">
    <location>
        <position position="234"/>
    </location>
    <ligand>
        <name>Zn(2+)</name>
        <dbReference type="ChEBI" id="CHEBI:29105"/>
    </ligand>
</feature>
<feature type="binding site" evidence="1">
    <location>
        <position position="238"/>
    </location>
    <ligand>
        <name>Zn(2+)</name>
        <dbReference type="ChEBI" id="CHEBI:29105"/>
    </ligand>
</feature>
<feature type="binding site" evidence="1">
    <location>
        <position position="268"/>
    </location>
    <ligand>
        <name>ATP</name>
        <dbReference type="ChEBI" id="CHEBI:30616"/>
    </ligand>
</feature>
<reference key="1">
    <citation type="submission" date="2007-04" db="EMBL/GenBank/DDBJ databases">
        <title>Complete sequence of chromosome of Mycobacterium gilvum PYR-GCK.</title>
        <authorList>
            <consortium name="US DOE Joint Genome Institute"/>
            <person name="Copeland A."/>
            <person name="Lucas S."/>
            <person name="Lapidus A."/>
            <person name="Barry K."/>
            <person name="Detter J.C."/>
            <person name="Glavina del Rio T."/>
            <person name="Hammon N."/>
            <person name="Israni S."/>
            <person name="Dalin E."/>
            <person name="Tice H."/>
            <person name="Pitluck S."/>
            <person name="Chain P."/>
            <person name="Malfatti S."/>
            <person name="Shin M."/>
            <person name="Vergez L."/>
            <person name="Schmutz J."/>
            <person name="Larimer F."/>
            <person name="Land M."/>
            <person name="Hauser L."/>
            <person name="Kyrpides N."/>
            <person name="Mikhailova N."/>
            <person name="Miller C."/>
            <person name="Richardson P."/>
        </authorList>
    </citation>
    <scope>NUCLEOTIDE SEQUENCE [LARGE SCALE GENOMIC DNA]</scope>
    <source>
        <strain>PYR-GCK</strain>
    </source>
</reference>
<accession>A4T5K9</accession>